<name>Y190_ADE07</name>
<organism>
    <name type="scientific">Human adenovirus B serotype 7</name>
    <name type="common">HAdV-7</name>
    <name type="synonym">Human adenovirus 7</name>
    <dbReference type="NCBI Taxonomy" id="10519"/>
    <lineage>
        <taxon>Viruses</taxon>
        <taxon>Varidnaviria</taxon>
        <taxon>Bamfordvirae</taxon>
        <taxon>Preplasmiviricota</taxon>
        <taxon>Tectiliviricetes</taxon>
        <taxon>Rowavirales</taxon>
        <taxon>Adenoviridae</taxon>
        <taxon>Mastadenovirus</taxon>
        <taxon>Human mastadenovirus B</taxon>
    </lineage>
</organism>
<accession>P05669</accession>
<reference key="1">
    <citation type="journal article" date="1983" name="Gene">
        <title>The nucleotide sequence of the genes encoded in early region 2b of human adenovirus type 7.</title>
        <authorList>
            <person name="Engler J.A."/>
            <person name="Hoppe M.S."/>
            <person name="van Bree M.P."/>
        </authorList>
    </citation>
    <scope>NUCLEOTIDE SEQUENCE [GENOMIC DNA]</scope>
    <source>
        <strain>Gomen</strain>
    </source>
</reference>
<feature type="chain" id="PRO_0000221927" description="Uncharacterized 19.0 kDa early protein">
    <location>
        <begin position="1"/>
        <end position="173"/>
    </location>
</feature>
<feature type="region of interest" description="Disordered" evidence="1">
    <location>
        <begin position="49"/>
        <end position="72"/>
    </location>
</feature>
<dbReference type="EMBL" id="X03000">
    <property type="protein sequence ID" value="CAA26769.1"/>
    <property type="molecule type" value="Genomic_DNA"/>
</dbReference>
<dbReference type="SMR" id="P05669"/>
<protein>
    <recommendedName>
        <fullName>Uncharacterized 19.0 kDa early protein</fullName>
    </recommendedName>
</protein>
<keyword id="KW-0244">Early protein</keyword>
<sequence length="173" mass="19011">MALMRSSWPLRLSITEQRSLSLLKSPEISCPGPVRSSSMMLLSLCPIPPTRSGRTSNSGNRGPVMTSTSSINSSKSWSGTLLPSLIPRCAMQPKHTLSQWRRDAVPTRQSISSTCWALTVQKKTGFPSKSTGRITKNTFSTASCGKRKANRVMTSSRKLSTTVPWMYSSPQSW</sequence>
<organismHost>
    <name type="scientific">Homo sapiens</name>
    <name type="common">Human</name>
    <dbReference type="NCBI Taxonomy" id="9606"/>
</organismHost>
<proteinExistence type="predicted"/>
<evidence type="ECO:0000256" key="1">
    <source>
        <dbReference type="SAM" id="MobiDB-lite"/>
    </source>
</evidence>